<reference key="1">
    <citation type="submission" date="2006-12" db="EMBL/GenBank/DDBJ databases">
        <title>Complete sequence of chromosome 1 of Verminephrobacter eiseniae EF01-2.</title>
        <authorList>
            <person name="Copeland A."/>
            <person name="Lucas S."/>
            <person name="Lapidus A."/>
            <person name="Barry K."/>
            <person name="Detter J.C."/>
            <person name="Glavina del Rio T."/>
            <person name="Dalin E."/>
            <person name="Tice H."/>
            <person name="Pitluck S."/>
            <person name="Chertkov O."/>
            <person name="Brettin T."/>
            <person name="Bruce D."/>
            <person name="Han C."/>
            <person name="Tapia R."/>
            <person name="Gilna P."/>
            <person name="Schmutz J."/>
            <person name="Larimer F."/>
            <person name="Land M."/>
            <person name="Hauser L."/>
            <person name="Kyrpides N."/>
            <person name="Kim E."/>
            <person name="Stahl D."/>
            <person name="Richardson P."/>
        </authorList>
    </citation>
    <scope>NUCLEOTIDE SEQUENCE [LARGE SCALE GENOMIC DNA]</scope>
    <source>
        <strain>EF01-2</strain>
    </source>
</reference>
<sequence length="458" mass="49535">MTATKGRNVVVVGTQWGDEGKGKLVDWLTQSAQGVVRFQGGHNAGHTLVINGVKTALHLIPSGIMRPGVKCYIGNGVVLSAAKLFEEIEGLEKAGVEVRSRLRISEACPLILPFHAAIDIAREAAREQGGAEKIGTTGRGIGPAYEDKIARRALRVQDLKHPERFAARLRELLDLHNHLLTTYLGSATFVFDAALKPYIEAGKVQFDVVHAEAMRHAELLKPMMADVSRELNEAHRAGINLLFEGAQGTLLDVDHGTYPYVTSSNCVAGNAAAGSGVGPGMLHYILGITKAYCTRVGGGPFPTELDWQVPGTPGYHMSLVGAEKGVTTGRSRRCGWFDAALLKRSAQVNGLSGLCITKLDVLDGLAELRLCTGYELDGARIDLPPMGAEDIIRCRPIYETLPGWSESTVGVTDYAKLPQNARRYLERIEQVTGVPIDLISTSPDRDHTIMMRHPYDAG</sequence>
<comment type="function">
    <text evidence="1">Plays an important role in the de novo pathway of purine nucleotide biosynthesis. Catalyzes the first committed step in the biosynthesis of AMP from IMP.</text>
</comment>
<comment type="catalytic activity">
    <reaction evidence="1">
        <text>IMP + L-aspartate + GTP = N(6)-(1,2-dicarboxyethyl)-AMP + GDP + phosphate + 2 H(+)</text>
        <dbReference type="Rhea" id="RHEA:15753"/>
        <dbReference type="ChEBI" id="CHEBI:15378"/>
        <dbReference type="ChEBI" id="CHEBI:29991"/>
        <dbReference type="ChEBI" id="CHEBI:37565"/>
        <dbReference type="ChEBI" id="CHEBI:43474"/>
        <dbReference type="ChEBI" id="CHEBI:57567"/>
        <dbReference type="ChEBI" id="CHEBI:58053"/>
        <dbReference type="ChEBI" id="CHEBI:58189"/>
        <dbReference type="EC" id="6.3.4.4"/>
    </reaction>
</comment>
<comment type="cofactor">
    <cofactor evidence="1">
        <name>Mg(2+)</name>
        <dbReference type="ChEBI" id="CHEBI:18420"/>
    </cofactor>
    <text evidence="1">Binds 1 Mg(2+) ion per subunit.</text>
</comment>
<comment type="pathway">
    <text evidence="1">Purine metabolism; AMP biosynthesis via de novo pathway; AMP from IMP: step 1/2.</text>
</comment>
<comment type="subunit">
    <text evidence="1">Homodimer.</text>
</comment>
<comment type="subcellular location">
    <subcellularLocation>
        <location evidence="1">Cytoplasm</location>
    </subcellularLocation>
</comment>
<comment type="similarity">
    <text evidence="1">Belongs to the adenylosuccinate synthetase family.</text>
</comment>
<feature type="chain" id="PRO_0000321815" description="Adenylosuccinate synthetase">
    <location>
        <begin position="1"/>
        <end position="458"/>
    </location>
</feature>
<feature type="active site" description="Proton acceptor" evidence="1">
    <location>
        <position position="18"/>
    </location>
</feature>
<feature type="active site" description="Proton donor" evidence="1">
    <location>
        <position position="46"/>
    </location>
</feature>
<feature type="binding site" evidence="1">
    <location>
        <begin position="17"/>
        <end position="23"/>
    </location>
    <ligand>
        <name>GTP</name>
        <dbReference type="ChEBI" id="CHEBI:37565"/>
    </ligand>
</feature>
<feature type="binding site" description="in other chain" evidence="1">
    <location>
        <begin position="18"/>
        <end position="21"/>
    </location>
    <ligand>
        <name>IMP</name>
        <dbReference type="ChEBI" id="CHEBI:58053"/>
        <note>ligand shared between dimeric partners</note>
    </ligand>
</feature>
<feature type="binding site" evidence="1">
    <location>
        <position position="18"/>
    </location>
    <ligand>
        <name>Mg(2+)</name>
        <dbReference type="ChEBI" id="CHEBI:18420"/>
    </ligand>
</feature>
<feature type="binding site" description="in other chain" evidence="1">
    <location>
        <begin position="43"/>
        <end position="46"/>
    </location>
    <ligand>
        <name>IMP</name>
        <dbReference type="ChEBI" id="CHEBI:58053"/>
        <note>ligand shared between dimeric partners</note>
    </ligand>
</feature>
<feature type="binding site" evidence="1">
    <location>
        <begin position="45"/>
        <end position="47"/>
    </location>
    <ligand>
        <name>GTP</name>
        <dbReference type="ChEBI" id="CHEBI:37565"/>
    </ligand>
</feature>
<feature type="binding site" evidence="1">
    <location>
        <position position="45"/>
    </location>
    <ligand>
        <name>Mg(2+)</name>
        <dbReference type="ChEBI" id="CHEBI:18420"/>
    </ligand>
</feature>
<feature type="binding site" description="in other chain" evidence="1">
    <location>
        <position position="137"/>
    </location>
    <ligand>
        <name>IMP</name>
        <dbReference type="ChEBI" id="CHEBI:58053"/>
        <note>ligand shared between dimeric partners</note>
    </ligand>
</feature>
<feature type="binding site" evidence="1">
    <location>
        <position position="151"/>
    </location>
    <ligand>
        <name>IMP</name>
        <dbReference type="ChEBI" id="CHEBI:58053"/>
        <note>ligand shared between dimeric partners</note>
    </ligand>
</feature>
<feature type="binding site" description="in other chain" evidence="1">
    <location>
        <position position="247"/>
    </location>
    <ligand>
        <name>IMP</name>
        <dbReference type="ChEBI" id="CHEBI:58053"/>
        <note>ligand shared between dimeric partners</note>
    </ligand>
</feature>
<feature type="binding site" description="in other chain" evidence="1">
    <location>
        <position position="262"/>
    </location>
    <ligand>
        <name>IMP</name>
        <dbReference type="ChEBI" id="CHEBI:58053"/>
        <note>ligand shared between dimeric partners</note>
    </ligand>
</feature>
<feature type="binding site" evidence="1">
    <location>
        <begin position="326"/>
        <end position="332"/>
    </location>
    <ligand>
        <name>substrate</name>
    </ligand>
</feature>
<feature type="binding site" description="in other chain" evidence="1">
    <location>
        <position position="330"/>
    </location>
    <ligand>
        <name>IMP</name>
        <dbReference type="ChEBI" id="CHEBI:58053"/>
        <note>ligand shared between dimeric partners</note>
    </ligand>
</feature>
<feature type="binding site" evidence="1">
    <location>
        <position position="332"/>
    </location>
    <ligand>
        <name>GTP</name>
        <dbReference type="ChEBI" id="CHEBI:37565"/>
    </ligand>
</feature>
<feature type="binding site" evidence="1">
    <location>
        <begin position="358"/>
        <end position="360"/>
    </location>
    <ligand>
        <name>GTP</name>
        <dbReference type="ChEBI" id="CHEBI:37565"/>
    </ligand>
</feature>
<feature type="binding site" evidence="1">
    <location>
        <begin position="440"/>
        <end position="442"/>
    </location>
    <ligand>
        <name>GTP</name>
        <dbReference type="ChEBI" id="CHEBI:37565"/>
    </ligand>
</feature>
<protein>
    <recommendedName>
        <fullName evidence="1">Adenylosuccinate synthetase</fullName>
        <shortName evidence="1">AMPSase</shortName>
        <shortName evidence="1">AdSS</shortName>
        <ecNumber evidence="1">6.3.4.4</ecNumber>
    </recommendedName>
    <alternativeName>
        <fullName evidence="1">IMP--aspartate ligase</fullName>
    </alternativeName>
</protein>
<organism>
    <name type="scientific">Verminephrobacter eiseniae (strain EF01-2)</name>
    <dbReference type="NCBI Taxonomy" id="391735"/>
    <lineage>
        <taxon>Bacteria</taxon>
        <taxon>Pseudomonadati</taxon>
        <taxon>Pseudomonadota</taxon>
        <taxon>Betaproteobacteria</taxon>
        <taxon>Burkholderiales</taxon>
        <taxon>Comamonadaceae</taxon>
        <taxon>Verminephrobacter</taxon>
    </lineage>
</organism>
<evidence type="ECO:0000255" key="1">
    <source>
        <dbReference type="HAMAP-Rule" id="MF_00011"/>
    </source>
</evidence>
<name>PURA_VEREI</name>
<gene>
    <name evidence="1" type="primary">purA</name>
    <name type="ordered locus">Veis_3162</name>
</gene>
<accession>A1WMN5</accession>
<keyword id="KW-0963">Cytoplasm</keyword>
<keyword id="KW-0342">GTP-binding</keyword>
<keyword id="KW-0436">Ligase</keyword>
<keyword id="KW-0460">Magnesium</keyword>
<keyword id="KW-0479">Metal-binding</keyword>
<keyword id="KW-0547">Nucleotide-binding</keyword>
<keyword id="KW-0658">Purine biosynthesis</keyword>
<keyword id="KW-1185">Reference proteome</keyword>
<dbReference type="EC" id="6.3.4.4" evidence="1"/>
<dbReference type="EMBL" id="CP000542">
    <property type="protein sequence ID" value="ABM58892.1"/>
    <property type="molecule type" value="Genomic_DNA"/>
</dbReference>
<dbReference type="RefSeq" id="WP_011810885.1">
    <property type="nucleotide sequence ID" value="NC_008786.1"/>
</dbReference>
<dbReference type="SMR" id="A1WMN5"/>
<dbReference type="STRING" id="391735.Veis_3162"/>
<dbReference type="GeneID" id="76461618"/>
<dbReference type="KEGG" id="vei:Veis_3162"/>
<dbReference type="eggNOG" id="COG0104">
    <property type="taxonomic scope" value="Bacteria"/>
</dbReference>
<dbReference type="HOGENOM" id="CLU_029848_0_0_4"/>
<dbReference type="OrthoDB" id="9807553at2"/>
<dbReference type="UniPathway" id="UPA00075">
    <property type="reaction ID" value="UER00335"/>
</dbReference>
<dbReference type="Proteomes" id="UP000000374">
    <property type="component" value="Chromosome"/>
</dbReference>
<dbReference type="GO" id="GO:0005737">
    <property type="term" value="C:cytoplasm"/>
    <property type="evidence" value="ECO:0007669"/>
    <property type="project" value="UniProtKB-SubCell"/>
</dbReference>
<dbReference type="GO" id="GO:0004019">
    <property type="term" value="F:adenylosuccinate synthase activity"/>
    <property type="evidence" value="ECO:0007669"/>
    <property type="project" value="UniProtKB-UniRule"/>
</dbReference>
<dbReference type="GO" id="GO:0005525">
    <property type="term" value="F:GTP binding"/>
    <property type="evidence" value="ECO:0007669"/>
    <property type="project" value="UniProtKB-UniRule"/>
</dbReference>
<dbReference type="GO" id="GO:0000287">
    <property type="term" value="F:magnesium ion binding"/>
    <property type="evidence" value="ECO:0007669"/>
    <property type="project" value="UniProtKB-UniRule"/>
</dbReference>
<dbReference type="GO" id="GO:0044208">
    <property type="term" value="P:'de novo' AMP biosynthetic process"/>
    <property type="evidence" value="ECO:0007669"/>
    <property type="project" value="UniProtKB-UniRule"/>
</dbReference>
<dbReference type="GO" id="GO:0046040">
    <property type="term" value="P:IMP metabolic process"/>
    <property type="evidence" value="ECO:0007669"/>
    <property type="project" value="TreeGrafter"/>
</dbReference>
<dbReference type="CDD" id="cd03108">
    <property type="entry name" value="AdSS"/>
    <property type="match status" value="1"/>
</dbReference>
<dbReference type="FunFam" id="1.10.300.10:FF:000001">
    <property type="entry name" value="Adenylosuccinate synthetase"/>
    <property type="match status" value="1"/>
</dbReference>
<dbReference type="FunFam" id="3.90.170.10:FF:000001">
    <property type="entry name" value="Adenylosuccinate synthetase"/>
    <property type="match status" value="1"/>
</dbReference>
<dbReference type="Gene3D" id="3.40.440.10">
    <property type="entry name" value="Adenylosuccinate Synthetase, subunit A, domain 1"/>
    <property type="match status" value="1"/>
</dbReference>
<dbReference type="Gene3D" id="1.10.300.10">
    <property type="entry name" value="Adenylosuccinate Synthetase, subunit A, domain 2"/>
    <property type="match status" value="1"/>
</dbReference>
<dbReference type="Gene3D" id="3.90.170.10">
    <property type="entry name" value="Adenylosuccinate Synthetase, subunit A, domain 3"/>
    <property type="match status" value="1"/>
</dbReference>
<dbReference type="HAMAP" id="MF_00011">
    <property type="entry name" value="Adenylosucc_synth"/>
    <property type="match status" value="1"/>
</dbReference>
<dbReference type="InterPro" id="IPR018220">
    <property type="entry name" value="Adenylosuccin_syn_GTP-bd"/>
</dbReference>
<dbReference type="InterPro" id="IPR033128">
    <property type="entry name" value="Adenylosuccin_syn_Lys_AS"/>
</dbReference>
<dbReference type="InterPro" id="IPR042109">
    <property type="entry name" value="Adenylosuccinate_synth_dom1"/>
</dbReference>
<dbReference type="InterPro" id="IPR042110">
    <property type="entry name" value="Adenylosuccinate_synth_dom2"/>
</dbReference>
<dbReference type="InterPro" id="IPR042111">
    <property type="entry name" value="Adenylosuccinate_synth_dom3"/>
</dbReference>
<dbReference type="InterPro" id="IPR001114">
    <property type="entry name" value="Adenylosuccinate_synthetase"/>
</dbReference>
<dbReference type="InterPro" id="IPR027417">
    <property type="entry name" value="P-loop_NTPase"/>
</dbReference>
<dbReference type="NCBIfam" id="NF002223">
    <property type="entry name" value="PRK01117.1"/>
    <property type="match status" value="1"/>
</dbReference>
<dbReference type="NCBIfam" id="TIGR00184">
    <property type="entry name" value="purA"/>
    <property type="match status" value="1"/>
</dbReference>
<dbReference type="PANTHER" id="PTHR11846">
    <property type="entry name" value="ADENYLOSUCCINATE SYNTHETASE"/>
    <property type="match status" value="1"/>
</dbReference>
<dbReference type="PANTHER" id="PTHR11846:SF0">
    <property type="entry name" value="ADENYLOSUCCINATE SYNTHETASE"/>
    <property type="match status" value="1"/>
</dbReference>
<dbReference type="Pfam" id="PF00709">
    <property type="entry name" value="Adenylsucc_synt"/>
    <property type="match status" value="1"/>
</dbReference>
<dbReference type="SMART" id="SM00788">
    <property type="entry name" value="Adenylsucc_synt"/>
    <property type="match status" value="1"/>
</dbReference>
<dbReference type="SUPFAM" id="SSF52540">
    <property type="entry name" value="P-loop containing nucleoside triphosphate hydrolases"/>
    <property type="match status" value="1"/>
</dbReference>
<dbReference type="PROSITE" id="PS01266">
    <property type="entry name" value="ADENYLOSUCCIN_SYN_1"/>
    <property type="match status" value="1"/>
</dbReference>
<dbReference type="PROSITE" id="PS00513">
    <property type="entry name" value="ADENYLOSUCCIN_SYN_2"/>
    <property type="match status" value="1"/>
</dbReference>
<proteinExistence type="inferred from homology"/>